<protein>
    <recommendedName>
        <fullName>UPF0758 protein PFL_6051</fullName>
    </recommendedName>
</protein>
<organism>
    <name type="scientific">Pseudomonas fluorescens (strain ATCC BAA-477 / NRRL B-23932 / Pf-5)</name>
    <dbReference type="NCBI Taxonomy" id="220664"/>
    <lineage>
        <taxon>Bacteria</taxon>
        <taxon>Pseudomonadati</taxon>
        <taxon>Pseudomonadota</taxon>
        <taxon>Gammaproteobacteria</taxon>
        <taxon>Pseudomonadales</taxon>
        <taxon>Pseudomonadaceae</taxon>
        <taxon>Pseudomonas</taxon>
    </lineage>
</organism>
<evidence type="ECO:0000255" key="1">
    <source>
        <dbReference type="PROSITE-ProRule" id="PRU01182"/>
    </source>
</evidence>
<evidence type="ECO:0000305" key="2"/>
<name>Y6051_PSEF5</name>
<gene>
    <name type="ordered locus">PFL_6051</name>
</gene>
<keyword id="KW-0378">Hydrolase</keyword>
<keyword id="KW-0479">Metal-binding</keyword>
<keyword id="KW-0482">Metalloprotease</keyword>
<keyword id="KW-0645">Protease</keyword>
<keyword id="KW-0862">Zinc</keyword>
<sequence length="224" mass="25337">MSIRDWPAAERPRERLLEQGAISLSDAELLAIFLRTGVAGKSAVDLARHLLRRFGSLRRLLEADQLTFTRQLGLGPAKYALLQAVLEMARRHLAEKLHRQSALENPLVVRDYLKSMLRHEPHEVFGCLFLDTRHRVLTFEVLFQGSIDSTTVYPRQVIKRALAHNAAAVILCHNHPSGICEPSPADRVVTRRLQEALELIDVRVLDHFIVGEGDPLSMAEYGWI</sequence>
<accession>Q4K3S4</accession>
<comment type="similarity">
    <text evidence="2">Belongs to the UPF0758 family.</text>
</comment>
<proteinExistence type="inferred from homology"/>
<dbReference type="EMBL" id="CP000076">
    <property type="protein sequence ID" value="AAY95239.1"/>
    <property type="molecule type" value="Genomic_DNA"/>
</dbReference>
<dbReference type="SMR" id="Q4K3S4"/>
<dbReference type="STRING" id="220664.PFL_6051"/>
<dbReference type="KEGG" id="pfl:PFL_6051"/>
<dbReference type="PATRIC" id="fig|220664.5.peg.6178"/>
<dbReference type="eggNOG" id="COG2003">
    <property type="taxonomic scope" value="Bacteria"/>
</dbReference>
<dbReference type="HOGENOM" id="CLU_073529_0_1_6"/>
<dbReference type="Proteomes" id="UP000008540">
    <property type="component" value="Chromosome"/>
</dbReference>
<dbReference type="GO" id="GO:0046872">
    <property type="term" value="F:metal ion binding"/>
    <property type="evidence" value="ECO:0007669"/>
    <property type="project" value="UniProtKB-KW"/>
</dbReference>
<dbReference type="GO" id="GO:0008237">
    <property type="term" value="F:metallopeptidase activity"/>
    <property type="evidence" value="ECO:0007669"/>
    <property type="project" value="UniProtKB-KW"/>
</dbReference>
<dbReference type="GO" id="GO:0006508">
    <property type="term" value="P:proteolysis"/>
    <property type="evidence" value="ECO:0007669"/>
    <property type="project" value="UniProtKB-KW"/>
</dbReference>
<dbReference type="CDD" id="cd08071">
    <property type="entry name" value="MPN_DUF2466"/>
    <property type="match status" value="1"/>
</dbReference>
<dbReference type="FunFam" id="3.40.140.10:FF:000032">
    <property type="entry name" value="DNA repair protein RadC"/>
    <property type="match status" value="1"/>
</dbReference>
<dbReference type="Gene3D" id="3.40.140.10">
    <property type="entry name" value="Cytidine Deaminase, domain 2"/>
    <property type="match status" value="1"/>
</dbReference>
<dbReference type="InterPro" id="IPR037518">
    <property type="entry name" value="MPN"/>
</dbReference>
<dbReference type="InterPro" id="IPR025657">
    <property type="entry name" value="RadC_JAB"/>
</dbReference>
<dbReference type="InterPro" id="IPR010994">
    <property type="entry name" value="RuvA_2-like"/>
</dbReference>
<dbReference type="InterPro" id="IPR001405">
    <property type="entry name" value="UPF0758"/>
</dbReference>
<dbReference type="InterPro" id="IPR020891">
    <property type="entry name" value="UPF0758_CS"/>
</dbReference>
<dbReference type="InterPro" id="IPR046778">
    <property type="entry name" value="UPF0758_N"/>
</dbReference>
<dbReference type="NCBIfam" id="NF000642">
    <property type="entry name" value="PRK00024.1"/>
    <property type="match status" value="1"/>
</dbReference>
<dbReference type="NCBIfam" id="TIGR00608">
    <property type="entry name" value="radc"/>
    <property type="match status" value="1"/>
</dbReference>
<dbReference type="PANTHER" id="PTHR30471">
    <property type="entry name" value="DNA REPAIR PROTEIN RADC"/>
    <property type="match status" value="1"/>
</dbReference>
<dbReference type="PANTHER" id="PTHR30471:SF3">
    <property type="entry name" value="UPF0758 PROTEIN YEES-RELATED"/>
    <property type="match status" value="1"/>
</dbReference>
<dbReference type="Pfam" id="PF04002">
    <property type="entry name" value="RadC"/>
    <property type="match status" value="1"/>
</dbReference>
<dbReference type="Pfam" id="PF20582">
    <property type="entry name" value="UPF0758_N"/>
    <property type="match status" value="1"/>
</dbReference>
<dbReference type="SUPFAM" id="SSF102712">
    <property type="entry name" value="JAB1/MPN domain"/>
    <property type="match status" value="1"/>
</dbReference>
<dbReference type="SUPFAM" id="SSF47781">
    <property type="entry name" value="RuvA domain 2-like"/>
    <property type="match status" value="1"/>
</dbReference>
<dbReference type="PROSITE" id="PS50249">
    <property type="entry name" value="MPN"/>
    <property type="match status" value="1"/>
</dbReference>
<dbReference type="PROSITE" id="PS01302">
    <property type="entry name" value="UPF0758"/>
    <property type="match status" value="1"/>
</dbReference>
<feature type="chain" id="PRO_1000001679" description="UPF0758 protein PFL_6051">
    <location>
        <begin position="1"/>
        <end position="224"/>
    </location>
</feature>
<feature type="domain" description="MPN" evidence="1">
    <location>
        <begin position="102"/>
        <end position="224"/>
    </location>
</feature>
<feature type="short sequence motif" description="JAMM motif" evidence="1">
    <location>
        <begin position="173"/>
        <end position="186"/>
    </location>
</feature>
<feature type="binding site" evidence="1">
    <location>
        <position position="173"/>
    </location>
    <ligand>
        <name>Zn(2+)</name>
        <dbReference type="ChEBI" id="CHEBI:29105"/>
        <note>catalytic</note>
    </ligand>
</feature>
<feature type="binding site" evidence="1">
    <location>
        <position position="175"/>
    </location>
    <ligand>
        <name>Zn(2+)</name>
        <dbReference type="ChEBI" id="CHEBI:29105"/>
        <note>catalytic</note>
    </ligand>
</feature>
<feature type="binding site" evidence="1">
    <location>
        <position position="186"/>
    </location>
    <ligand>
        <name>Zn(2+)</name>
        <dbReference type="ChEBI" id="CHEBI:29105"/>
        <note>catalytic</note>
    </ligand>
</feature>
<reference key="1">
    <citation type="journal article" date="2005" name="Nat. Biotechnol.">
        <title>Complete genome sequence of the plant commensal Pseudomonas fluorescens Pf-5.</title>
        <authorList>
            <person name="Paulsen I.T."/>
            <person name="Press C.M."/>
            <person name="Ravel J."/>
            <person name="Kobayashi D.Y."/>
            <person name="Myers G.S.A."/>
            <person name="Mavrodi D.V."/>
            <person name="DeBoy R.T."/>
            <person name="Seshadri R."/>
            <person name="Ren Q."/>
            <person name="Madupu R."/>
            <person name="Dodson R.J."/>
            <person name="Durkin A.S."/>
            <person name="Brinkac L.M."/>
            <person name="Daugherty S.C."/>
            <person name="Sullivan S.A."/>
            <person name="Rosovitz M.J."/>
            <person name="Gwinn M.L."/>
            <person name="Zhou L."/>
            <person name="Schneider D.J."/>
            <person name="Cartinhour S.W."/>
            <person name="Nelson W.C."/>
            <person name="Weidman J."/>
            <person name="Watkins K."/>
            <person name="Tran K."/>
            <person name="Khouri H."/>
            <person name="Pierson E.A."/>
            <person name="Pierson L.S. III"/>
            <person name="Thomashow L.S."/>
            <person name="Loper J.E."/>
        </authorList>
    </citation>
    <scope>NUCLEOTIDE SEQUENCE [LARGE SCALE GENOMIC DNA]</scope>
    <source>
        <strain>ATCC BAA-477 / NRRL B-23932 / Pf-5</strain>
    </source>
</reference>